<sequence>MIREIIRMGDKRLLRVAPPVTNLGSAELHTLVADMFETMDAARGVGLAAPQIAVDLQLMVFGFDASERYPEAPAVPRTALANAQIEPLSEDMENGWEGCLSIPGLRAVIPRYRFIRYRGFAPDGSPIERDAEGFHARVVQHEYDNLVGRLYPSRIENFDTFGFEDVLSYDL</sequence>
<accession>Q8PGV2</accession>
<proteinExistence type="inferred from homology"/>
<evidence type="ECO:0000255" key="1">
    <source>
        <dbReference type="HAMAP-Rule" id="MF_00163"/>
    </source>
</evidence>
<evidence type="ECO:0000305" key="2"/>
<feature type="chain" id="PRO_0000082883" description="Peptide deformylase 1">
    <location>
        <begin position="1"/>
        <end position="171"/>
    </location>
</feature>
<feature type="active site" evidence="1">
    <location>
        <position position="142"/>
    </location>
</feature>
<feature type="binding site" evidence="1">
    <location>
        <position position="99"/>
    </location>
    <ligand>
        <name>Fe cation</name>
        <dbReference type="ChEBI" id="CHEBI:24875"/>
    </ligand>
</feature>
<feature type="binding site" evidence="1">
    <location>
        <position position="141"/>
    </location>
    <ligand>
        <name>Fe cation</name>
        <dbReference type="ChEBI" id="CHEBI:24875"/>
    </ligand>
</feature>
<keyword id="KW-0378">Hydrolase</keyword>
<keyword id="KW-0408">Iron</keyword>
<keyword id="KW-0479">Metal-binding</keyword>
<keyword id="KW-0648">Protein biosynthesis</keyword>
<comment type="function">
    <text evidence="1">Removes the formyl group from the N-terminal Met of newly synthesized proteins. Requires at least a dipeptide for an efficient rate of reaction. N-terminal L-methionine is a prerequisite for activity but the enzyme has broad specificity at other positions.</text>
</comment>
<comment type="catalytic activity">
    <reaction evidence="1">
        <text>N-terminal N-formyl-L-methionyl-[peptide] + H2O = N-terminal L-methionyl-[peptide] + formate</text>
        <dbReference type="Rhea" id="RHEA:24420"/>
        <dbReference type="Rhea" id="RHEA-COMP:10639"/>
        <dbReference type="Rhea" id="RHEA-COMP:10640"/>
        <dbReference type="ChEBI" id="CHEBI:15377"/>
        <dbReference type="ChEBI" id="CHEBI:15740"/>
        <dbReference type="ChEBI" id="CHEBI:49298"/>
        <dbReference type="ChEBI" id="CHEBI:64731"/>
        <dbReference type="EC" id="3.5.1.88"/>
    </reaction>
</comment>
<comment type="cofactor">
    <cofactor evidence="1">
        <name>Fe(2+)</name>
        <dbReference type="ChEBI" id="CHEBI:29033"/>
    </cofactor>
    <text evidence="1">Binds 1 Fe(2+) ion.</text>
</comment>
<comment type="similarity">
    <text evidence="1">Belongs to the polypeptide deformylase family.</text>
</comment>
<comment type="caution">
    <text evidence="2">The third iron-binding site which is normally a His is replaced here by Asn-145.</text>
</comment>
<organism>
    <name type="scientific">Xanthomonas axonopodis pv. citri (strain 306)</name>
    <dbReference type="NCBI Taxonomy" id="190486"/>
    <lineage>
        <taxon>Bacteria</taxon>
        <taxon>Pseudomonadati</taxon>
        <taxon>Pseudomonadota</taxon>
        <taxon>Gammaproteobacteria</taxon>
        <taxon>Lysobacterales</taxon>
        <taxon>Lysobacteraceae</taxon>
        <taxon>Xanthomonas</taxon>
    </lineage>
</organism>
<protein>
    <recommendedName>
        <fullName evidence="1">Peptide deformylase 1</fullName>
        <shortName evidence="1">PDF 1</shortName>
        <ecNumber evidence="1">3.5.1.88</ecNumber>
    </recommendedName>
    <alternativeName>
        <fullName evidence="1">Polypeptide deformylase 1</fullName>
    </alternativeName>
</protein>
<reference key="1">
    <citation type="journal article" date="2002" name="Nature">
        <title>Comparison of the genomes of two Xanthomonas pathogens with differing host specificities.</title>
        <authorList>
            <person name="da Silva A.C.R."/>
            <person name="Ferro J.A."/>
            <person name="Reinach F.C."/>
            <person name="Farah C.S."/>
            <person name="Furlan L.R."/>
            <person name="Quaggio R.B."/>
            <person name="Monteiro-Vitorello C.B."/>
            <person name="Van Sluys M.A."/>
            <person name="Almeida N.F. Jr."/>
            <person name="Alves L.M.C."/>
            <person name="do Amaral A.M."/>
            <person name="Bertolini M.C."/>
            <person name="Camargo L.E.A."/>
            <person name="Camarotte G."/>
            <person name="Cannavan F."/>
            <person name="Cardozo J."/>
            <person name="Chambergo F."/>
            <person name="Ciapina L.P."/>
            <person name="Cicarelli R.M.B."/>
            <person name="Coutinho L.L."/>
            <person name="Cursino-Santos J.R."/>
            <person name="El-Dorry H."/>
            <person name="Faria J.B."/>
            <person name="Ferreira A.J.S."/>
            <person name="Ferreira R.C.C."/>
            <person name="Ferro M.I.T."/>
            <person name="Formighieri E.F."/>
            <person name="Franco M.C."/>
            <person name="Greggio C.C."/>
            <person name="Gruber A."/>
            <person name="Katsuyama A.M."/>
            <person name="Kishi L.T."/>
            <person name="Leite R.P."/>
            <person name="Lemos E.G.M."/>
            <person name="Lemos M.V.F."/>
            <person name="Locali E.C."/>
            <person name="Machado M.A."/>
            <person name="Madeira A.M.B.N."/>
            <person name="Martinez-Rossi N.M."/>
            <person name="Martins E.C."/>
            <person name="Meidanis J."/>
            <person name="Menck C.F.M."/>
            <person name="Miyaki C.Y."/>
            <person name="Moon D.H."/>
            <person name="Moreira L.M."/>
            <person name="Novo M.T.M."/>
            <person name="Okura V.K."/>
            <person name="Oliveira M.C."/>
            <person name="Oliveira V.R."/>
            <person name="Pereira H.A."/>
            <person name="Rossi A."/>
            <person name="Sena J.A.D."/>
            <person name="Silva C."/>
            <person name="de Souza R.F."/>
            <person name="Spinola L.A.F."/>
            <person name="Takita M.A."/>
            <person name="Tamura R.E."/>
            <person name="Teixeira E.C."/>
            <person name="Tezza R.I.D."/>
            <person name="Trindade dos Santos M."/>
            <person name="Truffi D."/>
            <person name="Tsai S.M."/>
            <person name="White F.F."/>
            <person name="Setubal J.C."/>
            <person name="Kitajima J.P."/>
        </authorList>
    </citation>
    <scope>NUCLEOTIDE SEQUENCE [LARGE SCALE GENOMIC DNA]</scope>
    <source>
        <strain>306</strain>
    </source>
</reference>
<name>DEF1_XANAC</name>
<gene>
    <name evidence="1" type="primary">def1</name>
    <name type="ordered locus">XAC3510</name>
</gene>
<dbReference type="EC" id="3.5.1.88" evidence="1"/>
<dbReference type="EMBL" id="AE008923">
    <property type="protein sequence ID" value="AAM38353.1"/>
    <property type="molecule type" value="Genomic_DNA"/>
</dbReference>
<dbReference type="SMR" id="Q8PGV2"/>
<dbReference type="KEGG" id="xac:XAC3510"/>
<dbReference type="eggNOG" id="COG0242">
    <property type="taxonomic scope" value="Bacteria"/>
</dbReference>
<dbReference type="HOGENOM" id="CLU_061901_5_2_6"/>
<dbReference type="Proteomes" id="UP000000576">
    <property type="component" value="Chromosome"/>
</dbReference>
<dbReference type="GO" id="GO:0046872">
    <property type="term" value="F:metal ion binding"/>
    <property type="evidence" value="ECO:0007669"/>
    <property type="project" value="UniProtKB-KW"/>
</dbReference>
<dbReference type="GO" id="GO:0042586">
    <property type="term" value="F:peptide deformylase activity"/>
    <property type="evidence" value="ECO:0007669"/>
    <property type="project" value="UniProtKB-UniRule"/>
</dbReference>
<dbReference type="GO" id="GO:0043686">
    <property type="term" value="P:co-translational protein modification"/>
    <property type="evidence" value="ECO:0007669"/>
    <property type="project" value="TreeGrafter"/>
</dbReference>
<dbReference type="GO" id="GO:0006412">
    <property type="term" value="P:translation"/>
    <property type="evidence" value="ECO:0007669"/>
    <property type="project" value="UniProtKB-UniRule"/>
</dbReference>
<dbReference type="CDD" id="cd00487">
    <property type="entry name" value="Pep_deformylase"/>
    <property type="match status" value="1"/>
</dbReference>
<dbReference type="FunFam" id="3.90.45.10:FF:000003">
    <property type="entry name" value="Peptide deformylase"/>
    <property type="match status" value="1"/>
</dbReference>
<dbReference type="Gene3D" id="3.90.45.10">
    <property type="entry name" value="Peptide deformylase"/>
    <property type="match status" value="1"/>
</dbReference>
<dbReference type="HAMAP" id="MF_00163">
    <property type="entry name" value="Pep_deformylase"/>
    <property type="match status" value="1"/>
</dbReference>
<dbReference type="InterPro" id="IPR023635">
    <property type="entry name" value="Peptide_deformylase"/>
</dbReference>
<dbReference type="InterPro" id="IPR036821">
    <property type="entry name" value="Peptide_deformylase_sf"/>
</dbReference>
<dbReference type="NCBIfam" id="TIGR00079">
    <property type="entry name" value="pept_deformyl"/>
    <property type="match status" value="1"/>
</dbReference>
<dbReference type="NCBIfam" id="NF001159">
    <property type="entry name" value="PRK00150.1-3"/>
    <property type="match status" value="1"/>
</dbReference>
<dbReference type="PANTHER" id="PTHR10458">
    <property type="entry name" value="PEPTIDE DEFORMYLASE"/>
    <property type="match status" value="1"/>
</dbReference>
<dbReference type="PANTHER" id="PTHR10458:SF20">
    <property type="entry name" value="PEPTIDE DEFORMYLASE 1"/>
    <property type="match status" value="1"/>
</dbReference>
<dbReference type="Pfam" id="PF01327">
    <property type="entry name" value="Pep_deformylase"/>
    <property type="match status" value="1"/>
</dbReference>
<dbReference type="PIRSF" id="PIRSF004749">
    <property type="entry name" value="Pep_def"/>
    <property type="match status" value="1"/>
</dbReference>
<dbReference type="PRINTS" id="PR01576">
    <property type="entry name" value="PDEFORMYLASE"/>
</dbReference>
<dbReference type="SUPFAM" id="SSF56420">
    <property type="entry name" value="Peptide deformylase"/>
    <property type="match status" value="1"/>
</dbReference>